<keyword id="KW-0963">Cytoplasm</keyword>
<keyword id="KW-0489">Methyltransferase</keyword>
<keyword id="KW-0698">rRNA processing</keyword>
<keyword id="KW-0949">S-adenosyl-L-methionine</keyword>
<keyword id="KW-0808">Transferase</keyword>
<evidence type="ECO:0000255" key="1">
    <source>
        <dbReference type="HAMAP-Rule" id="MF_00658"/>
    </source>
</evidence>
<feature type="chain" id="PRO_0000366555" description="Ribosomal RNA large subunit methyltransferase H">
    <location>
        <begin position="1"/>
        <end position="155"/>
    </location>
</feature>
<feature type="binding site" evidence="1">
    <location>
        <position position="72"/>
    </location>
    <ligand>
        <name>S-adenosyl-L-methionine</name>
        <dbReference type="ChEBI" id="CHEBI:59789"/>
    </ligand>
</feature>
<feature type="binding site" evidence="1">
    <location>
        <position position="103"/>
    </location>
    <ligand>
        <name>S-adenosyl-L-methionine</name>
        <dbReference type="ChEBI" id="CHEBI:59789"/>
    </ligand>
</feature>
<feature type="binding site" evidence="1">
    <location>
        <begin position="122"/>
        <end position="127"/>
    </location>
    <ligand>
        <name>S-adenosyl-L-methionine</name>
        <dbReference type="ChEBI" id="CHEBI:59789"/>
    </ligand>
</feature>
<gene>
    <name evidence="1" type="primary">rlmH</name>
    <name type="ordered locus">APP7_1662</name>
</gene>
<accession>B3H2J7</accession>
<protein>
    <recommendedName>
        <fullName evidence="1">Ribosomal RNA large subunit methyltransferase H</fullName>
        <ecNumber evidence="1">2.1.1.177</ecNumber>
    </recommendedName>
    <alternativeName>
        <fullName evidence="1">23S rRNA (pseudouridine1915-N3)-methyltransferase</fullName>
    </alternativeName>
    <alternativeName>
        <fullName evidence="1">23S rRNA m3Psi1915 methyltransferase</fullName>
    </alternativeName>
    <alternativeName>
        <fullName evidence="1">rRNA (pseudouridine-N3-)-methyltransferase RlmH</fullName>
    </alternativeName>
</protein>
<dbReference type="EC" id="2.1.1.177" evidence="1"/>
<dbReference type="EMBL" id="CP001091">
    <property type="protein sequence ID" value="ACE62314.1"/>
    <property type="molecule type" value="Genomic_DNA"/>
</dbReference>
<dbReference type="RefSeq" id="WP_005598965.1">
    <property type="nucleotide sequence ID" value="NC_010939.1"/>
</dbReference>
<dbReference type="SMR" id="B3H2J7"/>
<dbReference type="GeneID" id="92743802"/>
<dbReference type="KEGG" id="apa:APP7_1662"/>
<dbReference type="HOGENOM" id="CLU_100552_1_0_6"/>
<dbReference type="Proteomes" id="UP000001226">
    <property type="component" value="Chromosome"/>
</dbReference>
<dbReference type="GO" id="GO:0005737">
    <property type="term" value="C:cytoplasm"/>
    <property type="evidence" value="ECO:0007669"/>
    <property type="project" value="UniProtKB-SubCell"/>
</dbReference>
<dbReference type="GO" id="GO:0070038">
    <property type="term" value="F:rRNA (pseudouridine-N3-)-methyltransferase activity"/>
    <property type="evidence" value="ECO:0007669"/>
    <property type="project" value="UniProtKB-UniRule"/>
</dbReference>
<dbReference type="CDD" id="cd18081">
    <property type="entry name" value="RlmH-like"/>
    <property type="match status" value="1"/>
</dbReference>
<dbReference type="Gene3D" id="3.40.1280.10">
    <property type="match status" value="1"/>
</dbReference>
<dbReference type="HAMAP" id="MF_00658">
    <property type="entry name" value="23SrRNA_methyltr_H"/>
    <property type="match status" value="1"/>
</dbReference>
<dbReference type="InterPro" id="IPR029028">
    <property type="entry name" value="Alpha/beta_knot_MTases"/>
</dbReference>
<dbReference type="InterPro" id="IPR003742">
    <property type="entry name" value="RlmH-like"/>
</dbReference>
<dbReference type="InterPro" id="IPR029026">
    <property type="entry name" value="tRNA_m1G_MTases_N"/>
</dbReference>
<dbReference type="NCBIfam" id="NF000984">
    <property type="entry name" value="PRK00103.1-1"/>
    <property type="match status" value="1"/>
</dbReference>
<dbReference type="NCBIfam" id="NF000986">
    <property type="entry name" value="PRK00103.1-4"/>
    <property type="match status" value="1"/>
</dbReference>
<dbReference type="NCBIfam" id="TIGR00246">
    <property type="entry name" value="tRNA_RlmH_YbeA"/>
    <property type="match status" value="1"/>
</dbReference>
<dbReference type="PANTHER" id="PTHR33603">
    <property type="entry name" value="METHYLTRANSFERASE"/>
    <property type="match status" value="1"/>
</dbReference>
<dbReference type="PANTHER" id="PTHR33603:SF1">
    <property type="entry name" value="RIBOSOMAL RNA LARGE SUBUNIT METHYLTRANSFERASE H"/>
    <property type="match status" value="1"/>
</dbReference>
<dbReference type="Pfam" id="PF02590">
    <property type="entry name" value="SPOUT_MTase"/>
    <property type="match status" value="1"/>
</dbReference>
<dbReference type="PIRSF" id="PIRSF004505">
    <property type="entry name" value="MT_bac"/>
    <property type="match status" value="1"/>
</dbReference>
<dbReference type="SUPFAM" id="SSF75217">
    <property type="entry name" value="alpha/beta knot"/>
    <property type="match status" value="1"/>
</dbReference>
<proteinExistence type="inferred from homology"/>
<sequence>MKIQLIAVGQKMPDWVKVGFEEYQRRFPKDMPFELIEIPAGKRGKNADIKRILEQEGKAMLAAAGKGKVVTLDIPGKPWTTEQLASQLEAWKNDGRDVCLLIGGPEGLSPECKAAAEQSWSLSPLTLPHPMVRVIVAESLYRAWSLTTNHPYHRE</sequence>
<name>RLMH_ACTP7</name>
<organism>
    <name type="scientific">Actinobacillus pleuropneumoniae serotype 7 (strain AP76)</name>
    <dbReference type="NCBI Taxonomy" id="537457"/>
    <lineage>
        <taxon>Bacteria</taxon>
        <taxon>Pseudomonadati</taxon>
        <taxon>Pseudomonadota</taxon>
        <taxon>Gammaproteobacteria</taxon>
        <taxon>Pasteurellales</taxon>
        <taxon>Pasteurellaceae</taxon>
        <taxon>Actinobacillus</taxon>
    </lineage>
</organism>
<reference key="1">
    <citation type="submission" date="2008-06" db="EMBL/GenBank/DDBJ databases">
        <title>Genome and proteome analysis of A. pleuropneumoniae serotype 7.</title>
        <authorList>
            <person name="Linke B."/>
            <person name="Buettner F."/>
            <person name="Martinez-Arias R."/>
            <person name="Goesmann A."/>
            <person name="Baltes N."/>
            <person name="Tegetmeyer H."/>
            <person name="Singh M."/>
            <person name="Gerlach G.F."/>
        </authorList>
    </citation>
    <scope>NUCLEOTIDE SEQUENCE [LARGE SCALE GENOMIC DNA]</scope>
    <source>
        <strain>AP76</strain>
    </source>
</reference>
<comment type="function">
    <text evidence="1">Specifically methylates the pseudouridine at position 1915 (m3Psi1915) in 23S rRNA.</text>
</comment>
<comment type="catalytic activity">
    <reaction evidence="1">
        <text>pseudouridine(1915) in 23S rRNA + S-adenosyl-L-methionine = N(3)-methylpseudouridine(1915) in 23S rRNA + S-adenosyl-L-homocysteine + H(+)</text>
        <dbReference type="Rhea" id="RHEA:42752"/>
        <dbReference type="Rhea" id="RHEA-COMP:10221"/>
        <dbReference type="Rhea" id="RHEA-COMP:10222"/>
        <dbReference type="ChEBI" id="CHEBI:15378"/>
        <dbReference type="ChEBI" id="CHEBI:57856"/>
        <dbReference type="ChEBI" id="CHEBI:59789"/>
        <dbReference type="ChEBI" id="CHEBI:65314"/>
        <dbReference type="ChEBI" id="CHEBI:74486"/>
        <dbReference type="EC" id="2.1.1.177"/>
    </reaction>
</comment>
<comment type="subunit">
    <text evidence="1">Homodimer.</text>
</comment>
<comment type="subcellular location">
    <subcellularLocation>
        <location evidence="1">Cytoplasm</location>
    </subcellularLocation>
</comment>
<comment type="similarity">
    <text evidence="1">Belongs to the RNA methyltransferase RlmH family.</text>
</comment>